<protein>
    <recommendedName>
        <fullName evidence="8">Salivary protein SG34</fullName>
        <shortName evidence="7">AaSG34</shortName>
    </recommendedName>
    <alternativeName>
        <fullName>34-kDa salivary protein</fullName>
    </alternativeName>
</protein>
<comment type="function">
    <text evidence="9">Possible serine protease.</text>
</comment>
<comment type="function">
    <text evidence="5">(Microbial infection) Modulates replication of duck Tembusu virus in salivary glands and virus release into the saliva, probably via the regulation of antimicrobial peptides expression in response to virus infection.</text>
</comment>
<comment type="function">
    <text evidence="2">(Microbial infection) Enhances replication of dengue virus type 2 in human keratinocytes, probably by suppressing the production of type I interferons and antimicrobial peptides in response to virus infection.</text>
</comment>
<comment type="tissue specificity">
    <text evidence="3 4">Female salivary gland (at protein level) (PubMed:34880409). Low-level expression in ovary (PubMed:31265906).</text>
</comment>
<comment type="induction">
    <text evidence="3">Blood feeding does not affect expression levels.</text>
</comment>
<comment type="induction">
    <text evidence="5">(Microbial infection) Up-regulated in salivary glands following duck Tembusu virus infection.</text>
</comment>
<comment type="induction">
    <text evidence="3">(Microbial infection) Up-regulated in salivary glands following dengue virus type 2 infection.</text>
</comment>
<comment type="disruption phenotype">
    <text evidence="5">(Microbial infection) RNAi-mediated knockdown results in reduced replication of duck Tembusu virus in salivary gland after an infectious blood meal (PubMed:35032469). Reduced release of duck Tembusu virus in saliva (PubMed:35032469). Up-regulation of antimicrobial peptides in response to duck Tembusu virus infection (PubMed:35032469).</text>
</comment>
<comment type="disruption phenotype">
    <text evidence="3">(Microbial infection) RNAi-mediated knockdown results in reduced replication of dengue virus type 2 in salivary glands after an infectious blood meal (PubMed:31265906). Reduced release of dengue virus type 2 in saliva (PubMed:31265906). Reduced transmission of dengue virus type 2 to the mammalian host (PubMed:31265906).</text>
</comment>
<comment type="similarity">
    <text evidence="8">Belongs to the salivary protein SG34 family.</text>
</comment>
<keyword id="KW-0175">Coiled coil</keyword>
<keyword id="KW-1185">Reference proteome</keyword>
<keyword id="KW-0732">Signal</keyword>
<name>34K1_AEDAE</name>
<sequence length="312" mass="35740">MSPSKKILVLLLFPILLVSSHPIPAEDPAKQCNLSEDDLTKLKAAISSASSAKAANEDILPSTTLAACPMLKNFTEMLKTVATDMEVLKTQGVSNMEVQLLRESFEEKLNDLAKNKDIFERQANQDTSKAEGEMVEKINKLQLEMAKLQEEIEEQTKQMYVDMIEYIFERLKMNDTEAIDSYAQIVMKTKMHELIMKLKTDRLVLWEMVKYVEGKKNKWVGRKVLNTILDQVNKLKLYKPEEVEIGKNSLVVVWCWKFNSETVYGTTDEDQKSFHLAKLFFPKEKGCKECADVKSRTMCNNDYPKVMVKAFG</sequence>
<proteinExistence type="evidence at protein level"/>
<gene>
    <name evidence="6" type="ORF">AAEL003600</name>
</gene>
<accession>A0A1S4F550</accession>
<accession>Q17F12</accession>
<accession>Q1HRF7</accession>
<accession>Q1HRW0</accession>
<feature type="signal peptide" evidence="1">
    <location>
        <begin position="1"/>
        <end position="20"/>
    </location>
</feature>
<feature type="chain" id="PRO_0000460818" description="Salivary protein SG34" evidence="1">
    <location>
        <begin position="21"/>
        <end position="312"/>
    </location>
</feature>
<feature type="coiled-coil region" evidence="1">
    <location>
        <begin position="95"/>
        <end position="158"/>
    </location>
</feature>
<feature type="sequence conflict" description="In Ref. 2; ABF18017." evidence="8" ref="2">
    <original>K</original>
    <variation>N</variation>
    <location>
        <position position="5"/>
    </location>
</feature>
<feature type="sequence conflict" description="In Ref. 1; EAT45120 and 2; ABF18170." evidence="8" ref="1 2">
    <original>L</original>
    <variation>F</variation>
    <location>
        <position position="12"/>
    </location>
</feature>
<feature type="sequence conflict" description="In Ref. 2; ABF18017." evidence="8" ref="2">
    <original>S</original>
    <variation>G</variation>
    <location>
        <position position="48"/>
    </location>
</feature>
<feature type="sequence conflict" description="In Ref. 2; ABF18017." evidence="8" ref="2">
    <original>S</original>
    <variation>N</variation>
    <location>
        <position position="62"/>
    </location>
</feature>
<feature type="sequence conflict" description="In Ref. 2; ABF18017." evidence="8" ref="2">
    <original>D</original>
    <variation>N</variation>
    <location>
        <position position="292"/>
    </location>
</feature>
<evidence type="ECO:0000255" key="1"/>
<evidence type="ECO:0000269" key="2">
    <source>
    </source>
</evidence>
<evidence type="ECO:0000269" key="3">
    <source>
    </source>
</evidence>
<evidence type="ECO:0000269" key="4">
    <source>
    </source>
</evidence>
<evidence type="ECO:0000269" key="5">
    <source>
    </source>
</evidence>
<evidence type="ECO:0000303" key="6">
    <source>
    </source>
</evidence>
<evidence type="ECO:0000303" key="7">
    <source>
    </source>
</evidence>
<evidence type="ECO:0000305" key="8"/>
<evidence type="ECO:0000305" key="9">
    <source>
    </source>
</evidence>
<evidence type="ECO:0000312" key="10">
    <source>
        <dbReference type="EMBL" id="ABF18017.1"/>
    </source>
</evidence>
<evidence type="ECO:0000312" key="11">
    <source>
        <dbReference type="EMBL" id="ABF18170.1"/>
    </source>
</evidence>
<evidence type="ECO:0000312" key="12">
    <source>
        <dbReference type="EMBL" id="EAT45120.1"/>
    </source>
</evidence>
<evidence type="ECO:0000312" key="13">
    <source>
        <dbReference type="Proteomes" id="UP000008820"/>
    </source>
</evidence>
<reference evidence="12" key="1">
    <citation type="journal article" date="2007" name="Science">
        <title>Genome sequence of Aedes aegypti, a major arbovirus vector.</title>
        <authorList>
            <person name="Nene V."/>
            <person name="Wortman J.R."/>
            <person name="Lawson D."/>
            <person name="Haas B.J."/>
            <person name="Kodira C.D."/>
            <person name="Tu Z.J."/>
            <person name="Loftus B.J."/>
            <person name="Xi Z."/>
            <person name="Megy K."/>
            <person name="Grabherr M."/>
            <person name="Ren Q."/>
            <person name="Zdobnov E.M."/>
            <person name="Lobo N.F."/>
            <person name="Campbell K.S."/>
            <person name="Brown S.E."/>
            <person name="Bonaldo M.F."/>
            <person name="Zhu J."/>
            <person name="Sinkins S.P."/>
            <person name="Hogenkamp D.G."/>
            <person name="Amedeo P."/>
            <person name="Arensburger P."/>
            <person name="Atkinson P.W."/>
            <person name="Bidwell S.L."/>
            <person name="Biedler J."/>
            <person name="Birney E."/>
            <person name="Bruggner R.V."/>
            <person name="Costas J."/>
            <person name="Coy M.R."/>
            <person name="Crabtree J."/>
            <person name="Crawford M."/>
            <person name="DeBruyn B."/>
            <person name="DeCaprio D."/>
            <person name="Eiglmeier K."/>
            <person name="Eisenstadt E."/>
            <person name="El-Dorry H."/>
            <person name="Gelbart W.M."/>
            <person name="Gomes S.L."/>
            <person name="Hammond M."/>
            <person name="Hannick L.I."/>
            <person name="Hogan J.R."/>
            <person name="Holmes M.H."/>
            <person name="Jaffe D."/>
            <person name="Johnston S.J."/>
            <person name="Kennedy R.C."/>
            <person name="Koo H."/>
            <person name="Kravitz S."/>
            <person name="Kriventseva E.V."/>
            <person name="Kulp D."/>
            <person name="Labutti K."/>
            <person name="Lee E."/>
            <person name="Li S."/>
            <person name="Lovin D.D."/>
            <person name="Mao C."/>
            <person name="Mauceli E."/>
            <person name="Menck C.F."/>
            <person name="Miller J.R."/>
            <person name="Montgomery P."/>
            <person name="Mori A."/>
            <person name="Nascimento A.L."/>
            <person name="Naveira H.F."/>
            <person name="Nusbaum C."/>
            <person name="O'Leary S.B."/>
            <person name="Orvis J."/>
            <person name="Pertea M."/>
            <person name="Quesneville H."/>
            <person name="Reidenbach K.R."/>
            <person name="Rogers Y.-H.C."/>
            <person name="Roth C.W."/>
            <person name="Schneider J.R."/>
            <person name="Schatz M."/>
            <person name="Shumway M."/>
            <person name="Stanke M."/>
            <person name="Stinson E.O."/>
            <person name="Tubio J.M.C."/>
            <person name="Vanzee J.P."/>
            <person name="Verjovski-Almeida S."/>
            <person name="Werner D."/>
            <person name="White O.R."/>
            <person name="Wyder S."/>
            <person name="Zeng Q."/>
            <person name="Zhao Q."/>
            <person name="Zhao Y."/>
            <person name="Hill C.A."/>
            <person name="Raikhel A.S."/>
            <person name="Soares M.B."/>
            <person name="Knudson D.L."/>
            <person name="Lee N.H."/>
            <person name="Galagan J."/>
            <person name="Salzberg S.L."/>
            <person name="Paulsen I.T."/>
            <person name="Dimopoulos G."/>
            <person name="Collins F.H."/>
            <person name="Bruce B."/>
            <person name="Fraser-Liggett C.M."/>
            <person name="Severson D.W."/>
        </authorList>
    </citation>
    <scope>NUCLEOTIDE SEQUENCE [LARGE SCALE GENOMIC DNA]</scope>
    <source>
        <strain>Liverpool</strain>
        <tissue evidence="8">Larva</tissue>
    </source>
</reference>
<reference evidence="10 11" key="2">
    <citation type="journal article" date="2007" name="BMC Genomics">
        <title>An annotated catalogue of salivary gland transcripts in the adult female mosquito, Aedes aegypti.</title>
        <authorList>
            <person name="Ribeiro J.M.C."/>
            <person name="Arca B."/>
            <person name="Lombardo F."/>
            <person name="Calvo E."/>
            <person name="Phan V.M."/>
            <person name="Chandra P.K."/>
            <person name="Wikel S.K."/>
        </authorList>
    </citation>
    <scope>NUCLEOTIDE SEQUENCE [LARGE SCALE MRNA]</scope>
</reference>
<reference evidence="13" key="3">
    <citation type="journal article" date="2018" name="Nature">
        <title>Improved reference genome of Aedes aegypti informs arbovirus vector control.</title>
        <authorList>
            <person name="Matthews B.J."/>
            <person name="Dudchenko O."/>
            <person name="Kingan S.B."/>
            <person name="Koren S."/>
            <person name="Antoshechkin I."/>
            <person name="Crawford J.E."/>
            <person name="Glassford W.J."/>
            <person name="Herre M."/>
            <person name="Redmond S.N."/>
            <person name="Rose N.H."/>
            <person name="Weedall G.D."/>
            <person name="Wu Y."/>
            <person name="Batra S.S."/>
            <person name="Brito-Sierra C.A."/>
            <person name="Buckingham S.D."/>
            <person name="Campbell C.L."/>
            <person name="Chan S."/>
            <person name="Cox E."/>
            <person name="Evans B.R."/>
            <person name="Fansiri T."/>
            <person name="Filipovic I."/>
            <person name="Fontaine A."/>
            <person name="Gloria-Soria A."/>
            <person name="Hall R."/>
            <person name="Joardar V.S."/>
            <person name="Jones A.K."/>
            <person name="Kay R.G.G."/>
            <person name="Kodali V.K."/>
            <person name="Lee J."/>
            <person name="Lycett G.J."/>
            <person name="Mitchell S.N."/>
            <person name="Muehling J."/>
            <person name="Murphy M.R."/>
            <person name="Omer A.D."/>
            <person name="Partridge F.A."/>
            <person name="Peluso P."/>
            <person name="Aiden A.P."/>
            <person name="Ramasamy V."/>
            <person name="Rasic G."/>
            <person name="Roy S."/>
            <person name="Saavedra-Rodriguez K."/>
            <person name="Sharan S."/>
            <person name="Sharma A."/>
            <person name="Smith M.L."/>
            <person name="Turner J."/>
            <person name="Weakley A.M."/>
            <person name="Zhao Z."/>
            <person name="Akbari O.S."/>
            <person name="Black W.C. IV"/>
            <person name="Cao H."/>
            <person name="Darby A.C."/>
            <person name="Hill C.A."/>
            <person name="Johnston J.S."/>
            <person name="Murphy T.D."/>
            <person name="Raikhel A.S."/>
            <person name="Sattelle D.B."/>
            <person name="Sharakhov I.V."/>
            <person name="White B.J."/>
            <person name="Zhao L."/>
            <person name="Aiden E.L."/>
            <person name="Mann R.S."/>
            <person name="Lambrechts L."/>
            <person name="Powell J.R."/>
            <person name="Sharakhova M.V."/>
            <person name="Tu Z."/>
            <person name="Robertson H.M."/>
            <person name="McBride C.S."/>
            <person name="Hastie A.R."/>
            <person name="Korlach J."/>
            <person name="Neafsey D.E."/>
            <person name="Phillippy A.M."/>
            <person name="Vosshall L.B."/>
        </authorList>
    </citation>
    <scope>NUCLEOTIDE SEQUENCE [LARGE SCALE GENOMIC DNA]</scope>
    <source>
        <strain evidence="13">LVP_AGWG</strain>
    </source>
</reference>
<reference evidence="8" key="4">
    <citation type="journal article" date="2014" name="J. Invest. Dermatol.">
        <title>Aedes aegypti saliva contains a prominent 34-kDa protein that strongly enhances dengue virus replication in human keratinocytes.</title>
        <authorList>
            <person name="Surasombatpattana P."/>
            <person name="Ekchariyawat P."/>
            <person name="Hamel R."/>
            <person name="Patramool S."/>
            <person name="Thongrungkiat S."/>
            <person name="Denizot M."/>
            <person name="Delaunay P."/>
            <person name="Thomas F."/>
            <person name="Luplertlop N."/>
            <person name="Yssel H."/>
            <person name="Misse D."/>
        </authorList>
    </citation>
    <scope>FUNCTION (MICROBIAL INFECTION)</scope>
</reference>
<reference evidence="8" key="5">
    <citation type="journal article" date="2019" name="Insect Biochem. Mol. Biol.">
        <title>A salivary protein of Aedes aegypti promotes dengue-2 virus replication and transmission.</title>
        <authorList>
            <person name="Sri-In C."/>
            <person name="Weng S.C."/>
            <person name="Chen W.Y."/>
            <person name="Wu-Hsieh B.A."/>
            <person name="Tu W.C."/>
            <person name="Shiao S.H."/>
        </authorList>
    </citation>
    <scope>TISSUE SPECIFICITY</scope>
    <scope>INDUCTION</scope>
    <scope>INDUCTION (MICROBIAL INFECTION)</scope>
    <scope>DISRUPTION PHENOTYPE (MICROBIAL INFECTION)</scope>
    <scope>FUNCTION</scope>
</reference>
<reference key="6">
    <citation type="journal article" date="2021" name="Sci. Rep.">
        <title>High resolution proteomics of Aedes aegypti salivary glands infected with either dengue, Zika or chikungunya viruses identify new virus specific and broad antiviral factors.</title>
        <authorList>
            <person name="Chowdhury A."/>
            <person name="Modahl C.M."/>
            <person name="Misse D."/>
            <person name="Kini R.M."/>
            <person name="Pompon J."/>
        </authorList>
    </citation>
    <scope>IDENTIFICATION BY MASS SPECTROMETRY</scope>
    <scope>TISSUE SPECIFICITY</scope>
</reference>
<reference evidence="8" key="7">
    <citation type="journal article" date="2022" name="Acta Trop.">
        <title>Effects of Aedes aegypti salivary protein on duck Tembusu virus replication and transmission in salivary glands.</title>
        <authorList>
            <person name="Sri-In C."/>
            <person name="Thontiravong A."/>
            <person name="Bartholomay L.C."/>
            <person name="Tiawsirisup S."/>
        </authorList>
    </citation>
    <scope>FUNCTION (MICROBIAL INFECTION)</scope>
    <scope>INDUCTION (MICROBIAL INFECTION)</scope>
    <scope>DISRUPTION PHENOTYPE (MICROBIAL INFECTION)</scope>
</reference>
<organism evidence="13">
    <name type="scientific">Aedes aegypti</name>
    <name type="common">Yellowfever mosquito</name>
    <name type="synonym">Culex aegypti</name>
    <dbReference type="NCBI Taxonomy" id="7159"/>
    <lineage>
        <taxon>Eukaryota</taxon>
        <taxon>Metazoa</taxon>
        <taxon>Ecdysozoa</taxon>
        <taxon>Arthropoda</taxon>
        <taxon>Hexapoda</taxon>
        <taxon>Insecta</taxon>
        <taxon>Pterygota</taxon>
        <taxon>Neoptera</taxon>
        <taxon>Endopterygota</taxon>
        <taxon>Diptera</taxon>
        <taxon>Nematocera</taxon>
        <taxon>Culicoidea</taxon>
        <taxon>Culicidae</taxon>
        <taxon>Culicinae</taxon>
        <taxon>Aedini</taxon>
        <taxon>Aedes</taxon>
        <taxon>Stegomyia</taxon>
    </lineage>
</organism>
<dbReference type="EMBL" id="CH477277">
    <property type="protein sequence ID" value="EAT45120.1"/>
    <property type="molecule type" value="Genomic_DNA"/>
</dbReference>
<dbReference type="EMBL" id="DQ439984">
    <property type="protein sequence ID" value="ABF18017.1"/>
    <property type="molecule type" value="mRNA"/>
</dbReference>
<dbReference type="EMBL" id="DQ440137">
    <property type="protein sequence ID" value="ABF18170.1"/>
    <property type="molecule type" value="mRNA"/>
</dbReference>
<dbReference type="RefSeq" id="XP_001657054.1">
    <property type="nucleotide sequence ID" value="XM_001657004.1"/>
</dbReference>
<dbReference type="SMR" id="A0A1S4F550"/>
<dbReference type="PaxDb" id="7159-AAEL003600-PA"/>
<dbReference type="EnsemblMetazoa" id="AAEL003600-RA">
    <property type="protein sequence ID" value="AAEL003600-PA"/>
    <property type="gene ID" value="AAEL003600"/>
</dbReference>
<dbReference type="GeneID" id="5578630"/>
<dbReference type="KEGG" id="aag:5578630"/>
<dbReference type="VEuPathDB" id="VectorBase:AAEL003600"/>
<dbReference type="eggNOG" id="ENOG502TB32">
    <property type="taxonomic scope" value="Eukaryota"/>
</dbReference>
<dbReference type="HOGENOM" id="CLU_880587_0_0_1"/>
<dbReference type="InParanoid" id="A0A1S4F550"/>
<dbReference type="OMA" id="DMIEYIF"/>
<dbReference type="OrthoDB" id="7766299at2759"/>
<dbReference type="Proteomes" id="UP000008820">
    <property type="component" value="Chromosome 1"/>
</dbReference>
<dbReference type="Proteomes" id="UP000682892">
    <property type="component" value="Unassembled WGS sequence"/>
</dbReference>